<feature type="chain" id="PRO_0000179309" description="Trigger factor">
    <location>
        <begin position="1"/>
        <end position="431"/>
    </location>
</feature>
<feature type="domain" description="PPIase FKBP-type">
    <location>
        <begin position="163"/>
        <end position="248"/>
    </location>
</feature>
<accession>Q9K8F3</accession>
<protein>
    <recommendedName>
        <fullName>Trigger factor</fullName>
        <shortName>TF</shortName>
        <ecNumber>5.2.1.8</ecNumber>
    </recommendedName>
    <alternativeName>
        <fullName>PPIase</fullName>
    </alternativeName>
</protein>
<comment type="function">
    <text evidence="1">Involved in protein export. Acts as a chaperone by maintaining the newly synthesized protein in an open conformation. Functions as a peptidyl-prolyl cis-trans isomerase (By similarity).</text>
</comment>
<comment type="catalytic activity">
    <reaction>
        <text>[protein]-peptidylproline (omega=180) = [protein]-peptidylproline (omega=0)</text>
        <dbReference type="Rhea" id="RHEA:16237"/>
        <dbReference type="Rhea" id="RHEA-COMP:10747"/>
        <dbReference type="Rhea" id="RHEA-COMP:10748"/>
        <dbReference type="ChEBI" id="CHEBI:83833"/>
        <dbReference type="ChEBI" id="CHEBI:83834"/>
        <dbReference type="EC" id="5.2.1.8"/>
    </reaction>
</comment>
<comment type="subcellular location">
    <subcellularLocation>
        <location>Cytoplasm</location>
    </subcellularLocation>
    <text evidence="1">About half TF is bound to the ribosome near the polypeptide exit tunnel while the other half is free in the cytoplasm.</text>
</comment>
<comment type="domain">
    <text evidence="1">Consists of 3 domains; the N-terminus binds the ribosome, the middle domain has PPIase activity, while the C-terminus has intrinsic chaperone activity on its own.</text>
</comment>
<comment type="similarity">
    <text evidence="2">Belongs to the FKBP-type PPIase family. Tig subfamily.</text>
</comment>
<reference key="1">
    <citation type="journal article" date="2000" name="Nucleic Acids Res.">
        <title>Complete genome sequence of the alkaliphilic bacterium Bacillus halodurans and genomic sequence comparison with Bacillus subtilis.</title>
        <authorList>
            <person name="Takami H."/>
            <person name="Nakasone K."/>
            <person name="Takaki Y."/>
            <person name="Maeno G."/>
            <person name="Sasaki R."/>
            <person name="Masui N."/>
            <person name="Fuji F."/>
            <person name="Hirama C."/>
            <person name="Nakamura Y."/>
            <person name="Ogasawara N."/>
            <person name="Kuhara S."/>
            <person name="Horikoshi K."/>
        </authorList>
    </citation>
    <scope>NUCLEOTIDE SEQUENCE [LARGE SCALE GENOMIC DNA]</scope>
    <source>
        <strain>ATCC BAA-125 / DSM 18197 / FERM 7344 / JCM 9153 / C-125</strain>
    </source>
</reference>
<keyword id="KW-0131">Cell cycle</keyword>
<keyword id="KW-0132">Cell division</keyword>
<keyword id="KW-0143">Chaperone</keyword>
<keyword id="KW-0963">Cytoplasm</keyword>
<keyword id="KW-0413">Isomerase</keyword>
<keyword id="KW-1185">Reference proteome</keyword>
<keyword id="KW-0697">Rotamase</keyword>
<name>TIG_HALH5</name>
<gene>
    <name type="primary">tig</name>
    <name type="ordered locus">BH3053</name>
</gene>
<sequence length="431" mass="48891">MTAKWEKLEGNEGVLTVDVESAKVDEALDKAFKKVVKKVNVPGFRKGKVPRKIFERQFGVEALYQDALDILLPEAYAAAIDETGIEPVDRPEIDIEQMEQGNNLIFKATVTVKPEVQLGDYKGLEFEEKDTTVSDEDVEQELKSLQERQAELVVVEEEAIQEGDTAVLDFEGFVDGEAFEGGKAENYSLEIGSGQFIPGFEDQLVGLKAGEEKDVEVTFPEEYHAEELAGKPATFKVKIHDVKRKELPELDDEFAKDVDEEVESLDELKKKLREKLEKDRAHEADHEKRDTLIQKASENATIDIPEAMINTELDRMTQEFEQRLQMQGMNLEMYFQFSGQTQEQLREQMKEDAEKRVRVNLTLEAIANQENLEASDEDVEKELEKMAEMYQRSVDEIKSIFATQGGTDGIKADLKIQKAVDFLVEHSKAVS</sequence>
<organism>
    <name type="scientific">Halalkalibacterium halodurans (strain ATCC BAA-125 / DSM 18197 / FERM 7344 / JCM 9153 / C-125)</name>
    <name type="common">Bacillus halodurans</name>
    <dbReference type="NCBI Taxonomy" id="272558"/>
    <lineage>
        <taxon>Bacteria</taxon>
        <taxon>Bacillati</taxon>
        <taxon>Bacillota</taxon>
        <taxon>Bacilli</taxon>
        <taxon>Bacillales</taxon>
        <taxon>Bacillaceae</taxon>
        <taxon>Halalkalibacterium (ex Joshi et al. 2022)</taxon>
    </lineage>
</organism>
<dbReference type="EC" id="5.2.1.8"/>
<dbReference type="EMBL" id="BA000004">
    <property type="protein sequence ID" value="BAB06772.1"/>
    <property type="molecule type" value="Genomic_DNA"/>
</dbReference>
<dbReference type="PIR" id="E84031">
    <property type="entry name" value="E84031"/>
</dbReference>
<dbReference type="RefSeq" id="WP_010899197.1">
    <property type="nucleotide sequence ID" value="NC_002570.2"/>
</dbReference>
<dbReference type="SMR" id="Q9K8F3"/>
<dbReference type="STRING" id="272558.gene:10728963"/>
<dbReference type="GeneID" id="87598575"/>
<dbReference type="KEGG" id="bha:BH3053"/>
<dbReference type="eggNOG" id="COG0544">
    <property type="taxonomic scope" value="Bacteria"/>
</dbReference>
<dbReference type="HOGENOM" id="CLU_033058_3_2_9"/>
<dbReference type="OrthoDB" id="9767721at2"/>
<dbReference type="Proteomes" id="UP000001258">
    <property type="component" value="Chromosome"/>
</dbReference>
<dbReference type="GO" id="GO:0005737">
    <property type="term" value="C:cytoplasm"/>
    <property type="evidence" value="ECO:0007669"/>
    <property type="project" value="UniProtKB-SubCell"/>
</dbReference>
<dbReference type="GO" id="GO:0003755">
    <property type="term" value="F:peptidyl-prolyl cis-trans isomerase activity"/>
    <property type="evidence" value="ECO:0007669"/>
    <property type="project" value="UniProtKB-UniRule"/>
</dbReference>
<dbReference type="GO" id="GO:0044183">
    <property type="term" value="F:protein folding chaperone"/>
    <property type="evidence" value="ECO:0007669"/>
    <property type="project" value="TreeGrafter"/>
</dbReference>
<dbReference type="GO" id="GO:0043022">
    <property type="term" value="F:ribosome binding"/>
    <property type="evidence" value="ECO:0007669"/>
    <property type="project" value="TreeGrafter"/>
</dbReference>
<dbReference type="GO" id="GO:0051083">
    <property type="term" value="P:'de novo' cotranslational protein folding"/>
    <property type="evidence" value="ECO:0007669"/>
    <property type="project" value="TreeGrafter"/>
</dbReference>
<dbReference type="GO" id="GO:0051301">
    <property type="term" value="P:cell division"/>
    <property type="evidence" value="ECO:0007669"/>
    <property type="project" value="UniProtKB-KW"/>
</dbReference>
<dbReference type="GO" id="GO:0061077">
    <property type="term" value="P:chaperone-mediated protein folding"/>
    <property type="evidence" value="ECO:0007669"/>
    <property type="project" value="TreeGrafter"/>
</dbReference>
<dbReference type="GO" id="GO:0015031">
    <property type="term" value="P:protein transport"/>
    <property type="evidence" value="ECO:0007669"/>
    <property type="project" value="UniProtKB-UniRule"/>
</dbReference>
<dbReference type="GO" id="GO:0043335">
    <property type="term" value="P:protein unfolding"/>
    <property type="evidence" value="ECO:0007669"/>
    <property type="project" value="TreeGrafter"/>
</dbReference>
<dbReference type="FunFam" id="3.10.50.40:FF:000001">
    <property type="entry name" value="Trigger factor"/>
    <property type="match status" value="1"/>
</dbReference>
<dbReference type="Gene3D" id="3.10.50.40">
    <property type="match status" value="1"/>
</dbReference>
<dbReference type="Gene3D" id="3.30.70.1050">
    <property type="entry name" value="Trigger factor ribosome-binding domain"/>
    <property type="match status" value="1"/>
</dbReference>
<dbReference type="Gene3D" id="1.10.3120.10">
    <property type="entry name" value="Trigger factor, C-terminal domain"/>
    <property type="match status" value="1"/>
</dbReference>
<dbReference type="HAMAP" id="MF_00303">
    <property type="entry name" value="Trigger_factor_Tig"/>
    <property type="match status" value="1"/>
</dbReference>
<dbReference type="InterPro" id="IPR046357">
    <property type="entry name" value="PPIase_dom_sf"/>
</dbReference>
<dbReference type="InterPro" id="IPR001179">
    <property type="entry name" value="PPIase_FKBP_dom"/>
</dbReference>
<dbReference type="InterPro" id="IPR005215">
    <property type="entry name" value="Trig_fac"/>
</dbReference>
<dbReference type="InterPro" id="IPR008880">
    <property type="entry name" value="Trigger_fac_C"/>
</dbReference>
<dbReference type="InterPro" id="IPR037041">
    <property type="entry name" value="Trigger_fac_C_sf"/>
</dbReference>
<dbReference type="InterPro" id="IPR008881">
    <property type="entry name" value="Trigger_fac_ribosome-bd_bac"/>
</dbReference>
<dbReference type="InterPro" id="IPR036611">
    <property type="entry name" value="Trigger_fac_ribosome-bd_sf"/>
</dbReference>
<dbReference type="InterPro" id="IPR027304">
    <property type="entry name" value="Trigger_fact/SurA_dom_sf"/>
</dbReference>
<dbReference type="NCBIfam" id="TIGR00115">
    <property type="entry name" value="tig"/>
    <property type="match status" value="1"/>
</dbReference>
<dbReference type="PANTHER" id="PTHR30560">
    <property type="entry name" value="TRIGGER FACTOR CHAPERONE AND PEPTIDYL-PROLYL CIS/TRANS ISOMERASE"/>
    <property type="match status" value="1"/>
</dbReference>
<dbReference type="PANTHER" id="PTHR30560:SF3">
    <property type="entry name" value="TRIGGER FACTOR-LIKE PROTEIN TIG, CHLOROPLASTIC"/>
    <property type="match status" value="1"/>
</dbReference>
<dbReference type="Pfam" id="PF00254">
    <property type="entry name" value="FKBP_C"/>
    <property type="match status" value="1"/>
</dbReference>
<dbReference type="Pfam" id="PF05698">
    <property type="entry name" value="Trigger_C"/>
    <property type="match status" value="1"/>
</dbReference>
<dbReference type="Pfam" id="PF05697">
    <property type="entry name" value="Trigger_N"/>
    <property type="match status" value="1"/>
</dbReference>
<dbReference type="PIRSF" id="PIRSF003095">
    <property type="entry name" value="Trigger_factor"/>
    <property type="match status" value="1"/>
</dbReference>
<dbReference type="SUPFAM" id="SSF54534">
    <property type="entry name" value="FKBP-like"/>
    <property type="match status" value="1"/>
</dbReference>
<dbReference type="SUPFAM" id="SSF109998">
    <property type="entry name" value="Triger factor/SurA peptide-binding domain-like"/>
    <property type="match status" value="1"/>
</dbReference>
<dbReference type="SUPFAM" id="SSF102735">
    <property type="entry name" value="Trigger factor ribosome-binding domain"/>
    <property type="match status" value="1"/>
</dbReference>
<dbReference type="PROSITE" id="PS50059">
    <property type="entry name" value="FKBP_PPIASE"/>
    <property type="match status" value="1"/>
</dbReference>
<evidence type="ECO:0000250" key="1"/>
<evidence type="ECO:0000305" key="2"/>
<proteinExistence type="inferred from homology"/>